<accession>O06735</accession>
<reference key="1">
    <citation type="journal article" date="1997" name="Microbiology">
        <title>A Bacillus subtilis chromosome segment at the 100 degrees to 102 degrees position encoding 11 membrane proteins.</title>
        <authorList>
            <person name="Roche B."/>
            <person name="Autret S."/>
            <person name="Levine A."/>
            <person name="Vannier F."/>
            <person name="Medina N."/>
            <person name="Seror S.J."/>
        </authorList>
    </citation>
    <scope>NUCLEOTIDE SEQUENCE [GENOMIC DNA]</scope>
    <source>
        <strain>168</strain>
    </source>
</reference>
<reference key="2">
    <citation type="journal article" date="1997" name="Nature">
        <title>The complete genome sequence of the Gram-positive bacterium Bacillus subtilis.</title>
        <authorList>
            <person name="Kunst F."/>
            <person name="Ogasawara N."/>
            <person name="Moszer I."/>
            <person name="Albertini A.M."/>
            <person name="Alloni G."/>
            <person name="Azevedo V."/>
            <person name="Bertero M.G."/>
            <person name="Bessieres P."/>
            <person name="Bolotin A."/>
            <person name="Borchert S."/>
            <person name="Borriss R."/>
            <person name="Boursier L."/>
            <person name="Brans A."/>
            <person name="Braun M."/>
            <person name="Brignell S.C."/>
            <person name="Bron S."/>
            <person name="Brouillet S."/>
            <person name="Bruschi C.V."/>
            <person name="Caldwell B."/>
            <person name="Capuano V."/>
            <person name="Carter N.M."/>
            <person name="Choi S.-K."/>
            <person name="Codani J.-J."/>
            <person name="Connerton I.F."/>
            <person name="Cummings N.J."/>
            <person name="Daniel R.A."/>
            <person name="Denizot F."/>
            <person name="Devine K.M."/>
            <person name="Duesterhoeft A."/>
            <person name="Ehrlich S.D."/>
            <person name="Emmerson P.T."/>
            <person name="Entian K.-D."/>
            <person name="Errington J."/>
            <person name="Fabret C."/>
            <person name="Ferrari E."/>
            <person name="Foulger D."/>
            <person name="Fritz C."/>
            <person name="Fujita M."/>
            <person name="Fujita Y."/>
            <person name="Fuma S."/>
            <person name="Galizzi A."/>
            <person name="Galleron N."/>
            <person name="Ghim S.-Y."/>
            <person name="Glaser P."/>
            <person name="Goffeau A."/>
            <person name="Golightly E.J."/>
            <person name="Grandi G."/>
            <person name="Guiseppi G."/>
            <person name="Guy B.J."/>
            <person name="Haga K."/>
            <person name="Haiech J."/>
            <person name="Harwood C.R."/>
            <person name="Henaut A."/>
            <person name="Hilbert H."/>
            <person name="Holsappel S."/>
            <person name="Hosono S."/>
            <person name="Hullo M.-F."/>
            <person name="Itaya M."/>
            <person name="Jones L.-M."/>
            <person name="Joris B."/>
            <person name="Karamata D."/>
            <person name="Kasahara Y."/>
            <person name="Klaerr-Blanchard M."/>
            <person name="Klein C."/>
            <person name="Kobayashi Y."/>
            <person name="Koetter P."/>
            <person name="Koningstein G."/>
            <person name="Krogh S."/>
            <person name="Kumano M."/>
            <person name="Kurita K."/>
            <person name="Lapidus A."/>
            <person name="Lardinois S."/>
            <person name="Lauber J."/>
            <person name="Lazarevic V."/>
            <person name="Lee S.-M."/>
            <person name="Levine A."/>
            <person name="Liu H."/>
            <person name="Masuda S."/>
            <person name="Mauel C."/>
            <person name="Medigue C."/>
            <person name="Medina N."/>
            <person name="Mellado R.P."/>
            <person name="Mizuno M."/>
            <person name="Moestl D."/>
            <person name="Nakai S."/>
            <person name="Noback M."/>
            <person name="Noone D."/>
            <person name="O'Reilly M."/>
            <person name="Ogawa K."/>
            <person name="Ogiwara A."/>
            <person name="Oudega B."/>
            <person name="Park S.-H."/>
            <person name="Parro V."/>
            <person name="Pohl T.M."/>
            <person name="Portetelle D."/>
            <person name="Porwollik S."/>
            <person name="Prescott A.M."/>
            <person name="Presecan E."/>
            <person name="Pujic P."/>
            <person name="Purnelle B."/>
            <person name="Rapoport G."/>
            <person name="Rey M."/>
            <person name="Reynolds S."/>
            <person name="Rieger M."/>
            <person name="Rivolta C."/>
            <person name="Rocha E."/>
            <person name="Roche B."/>
            <person name="Rose M."/>
            <person name="Sadaie Y."/>
            <person name="Sato T."/>
            <person name="Scanlan E."/>
            <person name="Schleich S."/>
            <person name="Schroeter R."/>
            <person name="Scoffone F."/>
            <person name="Sekiguchi J."/>
            <person name="Sekowska A."/>
            <person name="Seror S.J."/>
            <person name="Serror P."/>
            <person name="Shin B.-S."/>
            <person name="Soldo B."/>
            <person name="Sorokin A."/>
            <person name="Tacconi E."/>
            <person name="Takagi T."/>
            <person name="Takahashi H."/>
            <person name="Takemaru K."/>
            <person name="Takeuchi M."/>
            <person name="Tamakoshi A."/>
            <person name="Tanaka T."/>
            <person name="Terpstra P."/>
            <person name="Tognoni A."/>
            <person name="Tosato V."/>
            <person name="Uchiyama S."/>
            <person name="Vandenbol M."/>
            <person name="Vannier F."/>
            <person name="Vassarotti A."/>
            <person name="Viari A."/>
            <person name="Wambutt R."/>
            <person name="Wedler E."/>
            <person name="Wedler H."/>
            <person name="Weitzenegger T."/>
            <person name="Winters P."/>
            <person name="Wipat A."/>
            <person name="Yamamoto H."/>
            <person name="Yamane K."/>
            <person name="Yasumoto K."/>
            <person name="Yata K."/>
            <person name="Yoshida K."/>
            <person name="Yoshikawa H.-F."/>
            <person name="Zumstein E."/>
            <person name="Yoshikawa H."/>
            <person name="Danchin A."/>
        </authorList>
    </citation>
    <scope>NUCLEOTIDE SEQUENCE [LARGE SCALE GENOMIC DNA]</scope>
    <source>
        <strain>168</strain>
    </source>
</reference>
<feature type="chain" id="PRO_0000105904" description="Probable adenylyl-sulfate kinase">
    <location>
        <begin position="1"/>
        <end position="199"/>
    </location>
</feature>
<feature type="active site" description="Phosphoserine intermediate" evidence="1">
    <location>
        <position position="108"/>
    </location>
</feature>
<feature type="binding site" evidence="1">
    <location>
        <begin position="34"/>
        <end position="41"/>
    </location>
    <ligand>
        <name>ATP</name>
        <dbReference type="ChEBI" id="CHEBI:30616"/>
    </ligand>
</feature>
<dbReference type="EC" id="2.7.1.25"/>
<dbReference type="EMBL" id="Y09476">
    <property type="protein sequence ID" value="CAA70655.1"/>
    <property type="status" value="ALT_INIT"/>
    <property type="molecule type" value="Genomic_DNA"/>
</dbReference>
<dbReference type="EMBL" id="AL009126">
    <property type="protein sequence ID" value="CAB12931.1"/>
    <property type="molecule type" value="Genomic_DNA"/>
</dbReference>
<dbReference type="PIR" id="A69839">
    <property type="entry name" value="A69839"/>
</dbReference>
<dbReference type="RefSeq" id="NP_388972.1">
    <property type="nucleotide sequence ID" value="NC_000964.3"/>
</dbReference>
<dbReference type="SMR" id="O06735"/>
<dbReference type="FunCoup" id="O06735">
    <property type="interactions" value="198"/>
</dbReference>
<dbReference type="STRING" id="224308.BSU10910"/>
<dbReference type="PaxDb" id="224308-BSU10910"/>
<dbReference type="EnsemblBacteria" id="CAB12931">
    <property type="protein sequence ID" value="CAB12931"/>
    <property type="gene ID" value="BSU_10910"/>
</dbReference>
<dbReference type="GeneID" id="936359"/>
<dbReference type="KEGG" id="bsu:BSU10910"/>
<dbReference type="PATRIC" id="fig|224308.179.peg.1173"/>
<dbReference type="eggNOG" id="COG0529">
    <property type="taxonomic scope" value="Bacteria"/>
</dbReference>
<dbReference type="InParanoid" id="O06735"/>
<dbReference type="OrthoDB" id="9804504at2"/>
<dbReference type="PhylomeDB" id="O06735"/>
<dbReference type="BioCyc" id="BSUB:BSU10910-MONOMER"/>
<dbReference type="UniPathway" id="UPA00140">
    <property type="reaction ID" value="UER00205"/>
</dbReference>
<dbReference type="Proteomes" id="UP000001570">
    <property type="component" value="Chromosome"/>
</dbReference>
<dbReference type="GO" id="GO:0004020">
    <property type="term" value="F:adenylylsulfate kinase activity"/>
    <property type="evidence" value="ECO:0000318"/>
    <property type="project" value="GO_Central"/>
</dbReference>
<dbReference type="GO" id="GO:0005524">
    <property type="term" value="F:ATP binding"/>
    <property type="evidence" value="ECO:0007669"/>
    <property type="project" value="UniProtKB-UniRule"/>
</dbReference>
<dbReference type="GO" id="GO:0070814">
    <property type="term" value="P:hydrogen sulfide biosynthetic process"/>
    <property type="evidence" value="ECO:0007669"/>
    <property type="project" value="UniProtKB-UniRule"/>
</dbReference>
<dbReference type="GO" id="GO:0000103">
    <property type="term" value="P:sulfate assimilation"/>
    <property type="evidence" value="ECO:0007669"/>
    <property type="project" value="UniProtKB-UniRule"/>
</dbReference>
<dbReference type="CDD" id="cd02027">
    <property type="entry name" value="APSK"/>
    <property type="match status" value="1"/>
</dbReference>
<dbReference type="FunFam" id="3.40.50.300:FF:000212">
    <property type="entry name" value="Adenylyl-sulfate kinase"/>
    <property type="match status" value="1"/>
</dbReference>
<dbReference type="Gene3D" id="3.40.50.300">
    <property type="entry name" value="P-loop containing nucleotide triphosphate hydrolases"/>
    <property type="match status" value="1"/>
</dbReference>
<dbReference type="HAMAP" id="MF_00065">
    <property type="entry name" value="Adenylyl_sulf_kinase"/>
    <property type="match status" value="1"/>
</dbReference>
<dbReference type="InterPro" id="IPR002891">
    <property type="entry name" value="APS_kinase"/>
</dbReference>
<dbReference type="InterPro" id="IPR027417">
    <property type="entry name" value="P-loop_NTPase"/>
</dbReference>
<dbReference type="NCBIfam" id="TIGR00455">
    <property type="entry name" value="apsK"/>
    <property type="match status" value="1"/>
</dbReference>
<dbReference type="NCBIfam" id="NF003013">
    <property type="entry name" value="PRK03846.1"/>
    <property type="match status" value="1"/>
</dbReference>
<dbReference type="NCBIfam" id="NF004041">
    <property type="entry name" value="PRK05541.1"/>
    <property type="match status" value="1"/>
</dbReference>
<dbReference type="PANTHER" id="PTHR11055">
    <property type="entry name" value="BIFUNCTIONAL 3'-PHOSPHOADENOSINE 5'-PHOSPHOSULFATE SYNTHASE"/>
    <property type="match status" value="1"/>
</dbReference>
<dbReference type="PANTHER" id="PTHR11055:SF1">
    <property type="entry name" value="PAPS SYNTHETASE, ISOFORM D"/>
    <property type="match status" value="1"/>
</dbReference>
<dbReference type="Pfam" id="PF01583">
    <property type="entry name" value="APS_kinase"/>
    <property type="match status" value="1"/>
</dbReference>
<dbReference type="SUPFAM" id="SSF52540">
    <property type="entry name" value="P-loop containing nucleoside triphosphate hydrolases"/>
    <property type="match status" value="1"/>
</dbReference>
<organism>
    <name type="scientific">Bacillus subtilis (strain 168)</name>
    <dbReference type="NCBI Taxonomy" id="224308"/>
    <lineage>
        <taxon>Bacteria</taxon>
        <taxon>Bacillati</taxon>
        <taxon>Bacillota</taxon>
        <taxon>Bacilli</taxon>
        <taxon>Bacillales</taxon>
        <taxon>Bacillaceae</taxon>
        <taxon>Bacillus</taxon>
    </lineage>
</organism>
<evidence type="ECO:0000250" key="1"/>
<evidence type="ECO:0000305" key="2"/>
<proteinExistence type="inferred from homology"/>
<name>CYSC2_BACSU</name>
<protein>
    <recommendedName>
        <fullName>Probable adenylyl-sulfate kinase</fullName>
        <ecNumber>2.7.1.25</ecNumber>
    </recommendedName>
    <alternativeName>
        <fullName>APS kinase</fullName>
    </alternativeName>
    <alternativeName>
        <fullName>ATP adenosine-5'-phosphosulfate 3'-phosphotransferase</fullName>
    </alternativeName>
    <alternativeName>
        <fullName>Adenosine-5'-phosphosulfate kinase</fullName>
    </alternativeName>
</protein>
<keyword id="KW-0067">ATP-binding</keyword>
<keyword id="KW-0418">Kinase</keyword>
<keyword id="KW-0547">Nucleotide-binding</keyword>
<keyword id="KW-0597">Phosphoprotein</keyword>
<keyword id="KW-1185">Reference proteome</keyword>
<keyword id="KW-0808">Transferase</keyword>
<comment type="function">
    <text evidence="1">Catalyzes the synthesis of activated sulfate.</text>
</comment>
<comment type="catalytic activity">
    <reaction>
        <text>adenosine 5'-phosphosulfate + ATP = 3'-phosphoadenylyl sulfate + ADP + H(+)</text>
        <dbReference type="Rhea" id="RHEA:24152"/>
        <dbReference type="ChEBI" id="CHEBI:15378"/>
        <dbReference type="ChEBI" id="CHEBI:30616"/>
        <dbReference type="ChEBI" id="CHEBI:58243"/>
        <dbReference type="ChEBI" id="CHEBI:58339"/>
        <dbReference type="ChEBI" id="CHEBI:456216"/>
        <dbReference type="EC" id="2.7.1.25"/>
    </reaction>
</comment>
<comment type="pathway">
    <text>Sulfur metabolism; hydrogen sulfide biosynthesis; sulfite from sulfate: step 2/3.</text>
</comment>
<comment type="similarity">
    <text evidence="2">Belongs to the APS kinase family.</text>
</comment>
<comment type="sequence caution" evidence="2">
    <conflict type="erroneous initiation">
        <sequence resource="EMBL-CDS" id="CAA70655"/>
    </conflict>
</comment>
<sequence length="199" mass="22304">MTHNPNIIWHPAAISKSDRQSLNGHKSCVLWFTGLSGSGKSVLANAVDEKLYRKGIQSYVLDGDNIRHGLNKDLGFQTGDRIENIRRIGEVAKLFVDSGQMILTAFISPFREDRDMVRALFPKGEFFEIYVKCPLHVCEQRDPKGLYKKARNGEIKHFTGIDSPYEAPLSPDFIIESDQTSISDGADLIINALQNRGII</sequence>
<gene>
    <name type="primary">yisZ</name>
    <name type="ordered locus">BSU10910</name>
</gene>